<accession>P77188</accession>
<accession>Q2MCD0</accession>
<keyword id="KW-0002">3D-structure</keyword>
<keyword id="KW-0143">Chaperone</keyword>
<keyword id="KW-1029">Fimbrium biogenesis</keyword>
<keyword id="KW-1185">Reference proteome</keyword>
<keyword id="KW-0732">Signal</keyword>
<name>ECPB_ECOLI</name>
<reference key="1">
    <citation type="submission" date="1997-01" db="EMBL/GenBank/DDBJ databases">
        <title>Sequence of minutes 4-25 of Escherichia coli.</title>
        <authorList>
            <person name="Chung E."/>
            <person name="Allen E."/>
            <person name="Araujo R."/>
            <person name="Aparicio A.M."/>
            <person name="Davis K."/>
            <person name="Duncan M."/>
            <person name="Federspiel N."/>
            <person name="Hyman R."/>
            <person name="Kalman S."/>
            <person name="Komp C."/>
            <person name="Kurdi O."/>
            <person name="Lew H."/>
            <person name="Lin D."/>
            <person name="Namath A."/>
            <person name="Oefner P."/>
            <person name="Roberts D."/>
            <person name="Schramm S."/>
            <person name="Davis R.W."/>
        </authorList>
    </citation>
    <scope>NUCLEOTIDE SEQUENCE [LARGE SCALE GENOMIC DNA]</scope>
    <source>
        <strain>K12 / MG1655 / ATCC 47076</strain>
    </source>
</reference>
<reference key="2">
    <citation type="journal article" date="1997" name="Science">
        <title>The complete genome sequence of Escherichia coli K-12.</title>
        <authorList>
            <person name="Blattner F.R."/>
            <person name="Plunkett G. III"/>
            <person name="Bloch C.A."/>
            <person name="Perna N.T."/>
            <person name="Burland V."/>
            <person name="Riley M."/>
            <person name="Collado-Vides J."/>
            <person name="Glasner J.D."/>
            <person name="Rode C.K."/>
            <person name="Mayhew G.F."/>
            <person name="Gregor J."/>
            <person name="Davis N.W."/>
            <person name="Kirkpatrick H.A."/>
            <person name="Goeden M.A."/>
            <person name="Rose D.J."/>
            <person name="Mau B."/>
            <person name="Shao Y."/>
        </authorList>
    </citation>
    <scope>NUCLEOTIDE SEQUENCE [LARGE SCALE GENOMIC DNA]</scope>
    <source>
        <strain>K12 / MG1655 / ATCC 47076</strain>
    </source>
</reference>
<reference key="3">
    <citation type="journal article" date="2006" name="Mol. Syst. Biol.">
        <title>Highly accurate genome sequences of Escherichia coli K-12 strains MG1655 and W3110.</title>
        <authorList>
            <person name="Hayashi K."/>
            <person name="Morooka N."/>
            <person name="Yamamoto Y."/>
            <person name="Fujita K."/>
            <person name="Isono K."/>
            <person name="Choi S."/>
            <person name="Ohtsubo E."/>
            <person name="Baba T."/>
            <person name="Wanner B.L."/>
            <person name="Mori H."/>
            <person name="Horiuchi T."/>
        </authorList>
    </citation>
    <scope>NUCLEOTIDE SEQUENCE [LARGE SCALE GENOMIC DNA]</scope>
    <source>
        <strain>K12 / W3110 / ATCC 27325 / DSM 5911</strain>
    </source>
</reference>
<reference key="4">
    <citation type="journal article" date="2001" name="J. Bacteriol.">
        <title>matB, a common fimbrillin gene of Escherichia coli, expressed in a genetically conserved, virulent clonal group.</title>
        <authorList>
            <person name="Pouttu R."/>
            <person name="Westerlund-Wikstrom B."/>
            <person name="Lang H."/>
            <person name="Alsti K."/>
            <person name="Virkola R."/>
            <person name="Saarela U."/>
            <person name="Siitonen A."/>
            <person name="Kalkkinen N."/>
            <person name="Korhonen T.K."/>
        </authorList>
    </citation>
    <scope>LACK OF EXPRESSION</scope>
    <source>
        <strain>K12</strain>
    </source>
</reference>
<reference key="5">
    <citation type="journal article" date="2010" name="Microbiology">
        <title>Mat fimbriae promote biofilm formation by meningitis-associated Escherichia coli.</title>
        <authorList>
            <person name="Lehti T.A."/>
            <person name="Bauchart P."/>
            <person name="Heikkinen J."/>
            <person name="Hacker J."/>
            <person name="Korhonen T.K."/>
            <person name="Dobrindt U."/>
            <person name="Westerlund-Wikstrom B."/>
        </authorList>
    </citation>
    <scope>EXPRESSION</scope>
    <source>
        <strain>K12</strain>
    </source>
</reference>
<proteinExistence type="evidence at protein level"/>
<dbReference type="EMBL" id="U73857">
    <property type="protein sequence ID" value="AAB18021.1"/>
    <property type="molecule type" value="Genomic_DNA"/>
</dbReference>
<dbReference type="EMBL" id="U00096">
    <property type="protein sequence ID" value="AAC73395.1"/>
    <property type="molecule type" value="Genomic_DNA"/>
</dbReference>
<dbReference type="EMBL" id="AP009048">
    <property type="protein sequence ID" value="BAE76076.1"/>
    <property type="molecule type" value="Genomic_DNA"/>
</dbReference>
<dbReference type="PIR" id="D64755">
    <property type="entry name" value="D64755"/>
</dbReference>
<dbReference type="RefSeq" id="NP_414826.1">
    <property type="nucleotide sequence ID" value="NC_000913.3"/>
</dbReference>
<dbReference type="RefSeq" id="WP_000716398.1">
    <property type="nucleotide sequence ID" value="NZ_STEB01000020.1"/>
</dbReference>
<dbReference type="PDB" id="5DFK">
    <property type="method" value="X-ray"/>
    <property type="resolution" value="2.40 A"/>
    <property type="chains" value="A=21-222"/>
</dbReference>
<dbReference type="PDBsum" id="5DFK"/>
<dbReference type="SMR" id="P77188"/>
<dbReference type="BioGRID" id="4259791">
    <property type="interactions" value="67"/>
</dbReference>
<dbReference type="BioGRID" id="853088">
    <property type="interactions" value="1"/>
</dbReference>
<dbReference type="FunCoup" id="P77188">
    <property type="interactions" value="268"/>
</dbReference>
<dbReference type="IntAct" id="P77188">
    <property type="interactions" value="53"/>
</dbReference>
<dbReference type="STRING" id="511145.b0292"/>
<dbReference type="PaxDb" id="511145-b0292"/>
<dbReference type="EnsemblBacteria" id="AAC73395">
    <property type="protein sequence ID" value="AAC73395"/>
    <property type="gene ID" value="b0292"/>
</dbReference>
<dbReference type="GeneID" id="75204621"/>
<dbReference type="GeneID" id="948806"/>
<dbReference type="KEGG" id="ecj:JW0286"/>
<dbReference type="KEGG" id="eco:b0292"/>
<dbReference type="KEGG" id="ecoc:C3026_01425"/>
<dbReference type="KEGG" id="ecoc:C3026_24055"/>
<dbReference type="PATRIC" id="fig|511145.12.peg.296"/>
<dbReference type="EchoBASE" id="EB3334"/>
<dbReference type="eggNOG" id="COG3121">
    <property type="taxonomic scope" value="Bacteria"/>
</dbReference>
<dbReference type="HOGENOM" id="CLU_106652_0_0_6"/>
<dbReference type="InParanoid" id="P77188"/>
<dbReference type="OMA" id="ENYFVMP"/>
<dbReference type="OrthoDB" id="8584734at2"/>
<dbReference type="BioCyc" id="EcoCyc:G6163-MONOMER"/>
<dbReference type="PRO" id="PR:P77188"/>
<dbReference type="Proteomes" id="UP000000625">
    <property type="component" value="Chromosome"/>
</dbReference>
<dbReference type="Gene3D" id="2.60.40.10">
    <property type="entry name" value="Immunoglobulins"/>
    <property type="match status" value="1"/>
</dbReference>
<dbReference type="InterPro" id="IPR040695">
    <property type="entry name" value="EcpB_C"/>
</dbReference>
<dbReference type="InterPro" id="IPR013783">
    <property type="entry name" value="Ig-like_fold"/>
</dbReference>
<dbReference type="InterPro" id="IPR008962">
    <property type="entry name" value="PapD-like_sf"/>
</dbReference>
<dbReference type="Pfam" id="PF18649">
    <property type="entry name" value="EcpB_C"/>
    <property type="match status" value="1"/>
</dbReference>
<dbReference type="SUPFAM" id="SSF49354">
    <property type="entry name" value="PapD-like"/>
    <property type="match status" value="1"/>
</dbReference>
<comment type="function">
    <text evidence="1">Part of the ecpRABCDE operon, which encodes the E.coli common pilus (ECP). ECP is found in both commensal and pathogenic strains and plays a dual role in early-stage biofilm development and host cell recognition (By similarity).</text>
</comment>
<comment type="interaction">
    <interactant intactId="EBI-1113651">
        <id>P77188</id>
    </interactant>
    <interactant intactId="EBI-550338">
        <id>P62620</id>
        <label>ispG</label>
    </interactant>
    <organismsDiffer>false</organismsDiffer>
    <experiments>2</experiments>
</comment>
<comment type="induction">
    <text evidence="1">Negatively regulated by H-NS. Positively regulated by IHF and EcpR (By similarity).</text>
</comment>
<comment type="miscellaneous">
    <text>Not expressed under classical laboratory conditions, but is functional when constitutively expressed (PubMed:11466275, PubMed:20522494).</text>
</comment>
<comment type="similarity">
    <text evidence="3">Belongs to the EcpB/EcpE family.</text>
</comment>
<gene>
    <name type="primary">ecpB</name>
    <name type="synonym">matC</name>
    <name type="synonym">yagY</name>
    <name type="ordered locus">b0292</name>
    <name type="ordered locus">JW0286</name>
</gene>
<feature type="signal peptide" evidence="2">
    <location>
        <begin position="1"/>
        <end position="20"/>
    </location>
</feature>
<feature type="chain" id="PRO_0000013789" description="Probable fimbrial chaperone EcpB">
    <location>
        <begin position="21"/>
        <end position="222"/>
    </location>
</feature>
<feature type="strand" evidence="4">
    <location>
        <begin position="26"/>
        <end position="30"/>
    </location>
</feature>
<feature type="strand" evidence="4">
    <location>
        <begin position="35"/>
        <end position="43"/>
    </location>
</feature>
<feature type="strand" evidence="4">
    <location>
        <begin position="45"/>
        <end position="47"/>
    </location>
</feature>
<feature type="strand" evidence="4">
    <location>
        <begin position="49"/>
        <end position="59"/>
    </location>
</feature>
<feature type="strand" evidence="4">
    <location>
        <begin position="75"/>
        <end position="79"/>
    </location>
</feature>
<feature type="strand" evidence="4">
    <location>
        <begin position="81"/>
        <end position="85"/>
    </location>
</feature>
<feature type="strand" evidence="4">
    <location>
        <begin position="89"/>
        <end position="97"/>
    </location>
</feature>
<feature type="strand" evidence="4">
    <location>
        <begin position="106"/>
        <end position="113"/>
    </location>
</feature>
<feature type="strand" evidence="4">
    <location>
        <begin position="136"/>
        <end position="143"/>
    </location>
</feature>
<feature type="strand" evidence="4">
    <location>
        <begin position="152"/>
        <end position="155"/>
    </location>
</feature>
<feature type="strand" evidence="4">
    <location>
        <begin position="158"/>
        <end position="161"/>
    </location>
</feature>
<feature type="strand" evidence="4">
    <location>
        <begin position="163"/>
        <end position="165"/>
    </location>
</feature>
<feature type="strand" evidence="4">
    <location>
        <begin position="167"/>
        <end position="177"/>
    </location>
</feature>
<feature type="helix" evidence="4">
    <location>
        <begin position="178"/>
        <end position="180"/>
    </location>
</feature>
<feature type="strand" evidence="4">
    <location>
        <begin position="184"/>
        <end position="190"/>
    </location>
</feature>
<feature type="strand" evidence="4">
    <location>
        <begin position="195"/>
        <end position="197"/>
    </location>
</feature>
<feature type="strand" evidence="4">
    <location>
        <begin position="199"/>
        <end position="201"/>
    </location>
</feature>
<feature type="strand" evidence="4">
    <location>
        <begin position="209"/>
        <end position="214"/>
    </location>
</feature>
<feature type="strand" evidence="4">
    <location>
        <begin position="217"/>
        <end position="222"/>
    </location>
</feature>
<organism>
    <name type="scientific">Escherichia coli (strain K12)</name>
    <dbReference type="NCBI Taxonomy" id="83333"/>
    <lineage>
        <taxon>Bacteria</taxon>
        <taxon>Pseudomonadati</taxon>
        <taxon>Pseudomonadota</taxon>
        <taxon>Gammaproteobacteria</taxon>
        <taxon>Enterobacterales</taxon>
        <taxon>Enterobacteriaceae</taxon>
        <taxon>Escherichia</taxon>
    </lineage>
</organism>
<protein>
    <recommendedName>
        <fullName>Probable fimbrial chaperone EcpB</fullName>
    </recommendedName>
</protein>
<sequence length="222" mass="24517">MKKHLLPLALLFSGISPAQALDVGDISSFMNSDSSTLSKTIKNSTDSGRLINIRLERLSSPLDDGQVISMDKPDELLLTPASLLLPAQASEVIRFFYKGPADEKERYYRIVWFDQALSDAQRDNANRSAVATASARIGTILVVAPRQANYHFQYANGSLTNTGNATLRILAYGPCLKAANGKECKENYYLMPGKSRRFTRVDTADNKGRVALWQGDKFIPVK</sequence>
<evidence type="ECO:0000250" key="1"/>
<evidence type="ECO:0000255" key="2"/>
<evidence type="ECO:0000305" key="3"/>
<evidence type="ECO:0007829" key="4">
    <source>
        <dbReference type="PDB" id="5DFK"/>
    </source>
</evidence>